<proteinExistence type="inferred from homology"/>
<feature type="signal peptide" evidence="1">
    <location>
        <begin position="1"/>
        <end position="25"/>
    </location>
</feature>
<feature type="chain" id="PRO_0000380559" description="Lipopolysaccharide core heptose(II)-phosphate phosphatase">
    <location>
        <begin position="26"/>
        <end position="200"/>
    </location>
</feature>
<reference key="1">
    <citation type="journal article" date="2006" name="Proc. Natl. Acad. Sci. U.S.A.">
        <title>Identification of genes subject to positive selection in uropathogenic strains of Escherichia coli: a comparative genomics approach.</title>
        <authorList>
            <person name="Chen S.L."/>
            <person name="Hung C.-S."/>
            <person name="Xu J."/>
            <person name="Reigstad C.S."/>
            <person name="Magrini V."/>
            <person name="Sabo A."/>
            <person name="Blasiar D."/>
            <person name="Bieri T."/>
            <person name="Meyer R.R."/>
            <person name="Ozersky P."/>
            <person name="Armstrong J.R."/>
            <person name="Fulton R.S."/>
            <person name="Latreille J.P."/>
            <person name="Spieth J."/>
            <person name="Hooton T.M."/>
            <person name="Mardis E.R."/>
            <person name="Hultgren S.J."/>
            <person name="Gordon J.I."/>
        </authorList>
    </citation>
    <scope>NUCLEOTIDE SEQUENCE [LARGE SCALE GENOMIC DNA]</scope>
    <source>
        <strain>UTI89 / UPEC</strain>
    </source>
</reference>
<dbReference type="EC" id="3.1.3.-" evidence="1"/>
<dbReference type="EMBL" id="CP000243">
    <property type="protein sequence ID" value="ABE08001.1"/>
    <property type="status" value="ALT_INIT"/>
    <property type="molecule type" value="Genomic_DNA"/>
</dbReference>
<dbReference type="RefSeq" id="WP_000879110.1">
    <property type="nucleotide sequence ID" value="NZ_CP064825.1"/>
</dbReference>
<dbReference type="SMR" id="Q1R9G3"/>
<dbReference type="KEGG" id="eci:UTI89_C2534"/>
<dbReference type="HOGENOM" id="CLU_106705_1_0_6"/>
<dbReference type="UniPathway" id="UPA00451"/>
<dbReference type="Proteomes" id="UP000001952">
    <property type="component" value="Chromosome"/>
</dbReference>
<dbReference type="GO" id="GO:0042597">
    <property type="term" value="C:periplasmic space"/>
    <property type="evidence" value="ECO:0007669"/>
    <property type="project" value="UniProtKB-SubCell"/>
</dbReference>
<dbReference type="GO" id="GO:0016791">
    <property type="term" value="F:phosphatase activity"/>
    <property type="evidence" value="ECO:0007669"/>
    <property type="project" value="UniProtKB-UniRule"/>
</dbReference>
<dbReference type="GO" id="GO:0008653">
    <property type="term" value="P:lipopolysaccharide metabolic process"/>
    <property type="evidence" value="ECO:0007669"/>
    <property type="project" value="UniProtKB-UniRule"/>
</dbReference>
<dbReference type="CDD" id="cd07040">
    <property type="entry name" value="HP"/>
    <property type="match status" value="1"/>
</dbReference>
<dbReference type="Gene3D" id="3.40.50.1240">
    <property type="entry name" value="Phosphoglycerate mutase-like"/>
    <property type="match status" value="1"/>
</dbReference>
<dbReference type="HAMAP" id="MF_01868">
    <property type="entry name" value="Ais"/>
    <property type="match status" value="1"/>
</dbReference>
<dbReference type="InterPro" id="IPR013078">
    <property type="entry name" value="His_Pase_superF_clade-1"/>
</dbReference>
<dbReference type="InterPro" id="IPR029033">
    <property type="entry name" value="His_PPase_superfam"/>
</dbReference>
<dbReference type="InterPro" id="IPR011310">
    <property type="entry name" value="LipoPS_heptP_Pase"/>
</dbReference>
<dbReference type="NCBIfam" id="NF011945">
    <property type="entry name" value="PRK15416.1"/>
    <property type="match status" value="1"/>
</dbReference>
<dbReference type="Pfam" id="PF00300">
    <property type="entry name" value="His_Phos_1"/>
    <property type="match status" value="1"/>
</dbReference>
<dbReference type="PIRSF" id="PIRSF011416">
    <property type="entry name" value="Ais-TraG-AfrS"/>
    <property type="match status" value="1"/>
</dbReference>
<dbReference type="SUPFAM" id="SSF53254">
    <property type="entry name" value="Phosphoglycerate mutase-like"/>
    <property type="match status" value="1"/>
</dbReference>
<sequence>MLAFCRSSLKSKKYFIILLALAAIAGLGTHAAWSSNGLPRIDNKTLARLAQQHPVVVLFRHAERCDRSTNQCLSDKTGITVKGTQDARELGNAFSADIPDFDLYSSNTVRTIQSATWFSAGKKLTVDKRFLQCGNEIYSAIKDLQRKAPDKNIVIFTHNHCLTYIAKDKRDATFKPDYLDGLVMHVEKGKVYLDGEFVNH</sequence>
<evidence type="ECO:0000255" key="1">
    <source>
        <dbReference type="HAMAP-Rule" id="MF_01868"/>
    </source>
</evidence>
<evidence type="ECO:0000305" key="2"/>
<gene>
    <name evidence="1" type="primary">ais</name>
    <name type="ordered locus">UTI89_C2534</name>
</gene>
<name>AIS_ECOUT</name>
<organism>
    <name type="scientific">Escherichia coli (strain UTI89 / UPEC)</name>
    <dbReference type="NCBI Taxonomy" id="364106"/>
    <lineage>
        <taxon>Bacteria</taxon>
        <taxon>Pseudomonadati</taxon>
        <taxon>Pseudomonadota</taxon>
        <taxon>Gammaproteobacteria</taxon>
        <taxon>Enterobacterales</taxon>
        <taxon>Enterobacteriaceae</taxon>
        <taxon>Escherichia</taxon>
    </lineage>
</organism>
<protein>
    <recommendedName>
        <fullName evidence="1">Lipopolysaccharide core heptose(II)-phosphate phosphatase</fullName>
        <ecNumber evidence="1">3.1.3.-</ecNumber>
    </recommendedName>
</protein>
<comment type="function">
    <text evidence="1">Catalyzes the dephosphorylation of heptose(II) of the outer membrane lipopolysaccharide core.</text>
</comment>
<comment type="pathway">
    <text evidence="1">Bacterial outer membrane biogenesis; lipopolysaccharide metabolism.</text>
</comment>
<comment type="subcellular location">
    <subcellularLocation>
        <location evidence="1">Periplasm</location>
    </subcellularLocation>
</comment>
<comment type="similarity">
    <text evidence="1">Belongs to the phosphoglycerate mutase family. Ais subfamily.</text>
</comment>
<comment type="sequence caution" evidence="2">
    <conflict type="erroneous initiation">
        <sequence resource="EMBL-CDS" id="ABE08001"/>
    </conflict>
</comment>
<accession>Q1R9G3</accession>
<keyword id="KW-0378">Hydrolase</keyword>
<keyword id="KW-0574">Periplasm</keyword>
<keyword id="KW-0732">Signal</keyword>